<gene>
    <name type="primary">aph</name>
</gene>
<name>KKA5_STRFR</name>
<feature type="chain" id="PRO_0000204808" description="Aminoglycoside 3'-phosphotransferase">
    <location>
        <begin position="1"/>
        <end position="268"/>
    </location>
</feature>
<feature type="active site" description="Proton acceptor" evidence="1">
    <location>
        <position position="188"/>
    </location>
</feature>
<organism>
    <name type="scientific">Streptomyces fradiae</name>
    <name type="common">Streptomyces roseoflavus</name>
    <dbReference type="NCBI Taxonomy" id="1906"/>
    <lineage>
        <taxon>Bacteria</taxon>
        <taxon>Bacillati</taxon>
        <taxon>Actinomycetota</taxon>
        <taxon>Actinomycetes</taxon>
        <taxon>Kitasatosporales</taxon>
        <taxon>Streptomycetaceae</taxon>
        <taxon>Streptomyces</taxon>
    </lineage>
</organism>
<accession>P00555</accession>
<protein>
    <recommendedName>
        <fullName>Aminoglycoside 3'-phosphotransferase</fullName>
        <ecNumber>2.7.1.95</ecNumber>
    </recommendedName>
    <alternativeName>
        <fullName>APH(3')V</fullName>
    </alternativeName>
    <alternativeName>
        <fullName>Kanamycin kinase, type V</fullName>
    </alternativeName>
    <alternativeName>
        <fullName>Neomycin-kanamycin phosphotransferase type V</fullName>
    </alternativeName>
</protein>
<comment type="function">
    <text>Resistance to kanamycin and structurally-related aminoglycosides, including amikacin.</text>
</comment>
<comment type="catalytic activity">
    <reaction>
        <text>kanamycin A + ATP = kanamycin 3'-phosphate + ADP + H(+)</text>
        <dbReference type="Rhea" id="RHEA:24256"/>
        <dbReference type="ChEBI" id="CHEBI:15378"/>
        <dbReference type="ChEBI" id="CHEBI:30616"/>
        <dbReference type="ChEBI" id="CHEBI:57909"/>
        <dbReference type="ChEBI" id="CHEBI:58214"/>
        <dbReference type="ChEBI" id="CHEBI:456216"/>
        <dbReference type="EC" id="2.7.1.95"/>
    </reaction>
</comment>
<comment type="similarity">
    <text evidence="2">Belongs to the aminoglycoside phosphotransferase family.</text>
</comment>
<keyword id="KW-0046">Antibiotic resistance</keyword>
<keyword id="KW-0067">ATP-binding</keyword>
<keyword id="KW-0418">Kinase</keyword>
<keyword id="KW-0547">Nucleotide-binding</keyword>
<keyword id="KW-0808">Transferase</keyword>
<reference key="1">
    <citation type="journal article" date="1983" name="Proc. Natl. Acad. Sci. U.S.A.">
        <title>Nucleotide sequence of a streptomycete aminoglycoside phosphotransferase gene and its relationship to phosphotransferases encoded by resistance plasmids.</title>
        <authorList>
            <person name="Thompson C.J."/>
            <person name="Gray G.S."/>
        </authorList>
    </citation>
    <scope>NUCLEOTIDE SEQUENCE [GENOMIC DNA]</scope>
    <source>
        <strain>ATCC 10745 / CBS 498.68 / DSM 40063 / JCM 4133 / NBRC 12773 / NCIMB 8233 / NRRL B-1195 / VKM Ac-150</strain>
    </source>
</reference>
<reference key="2">
    <citation type="journal article" date="1985" name="Mol. Gen. Genet.">
        <title>Nucleotide sequences encoding and promoting expression of three antibiotic resistance genes indigenous to Streptomyces.</title>
        <authorList>
            <person name="Bibb M.J."/>
            <person name="Bibb M.J."/>
            <person name="Ward J.M."/>
            <person name="Cohen S.N."/>
        </authorList>
    </citation>
    <scope>NUCLEOTIDE SEQUENCE [GENOMIC DNA] OF 1-71</scope>
</reference>
<evidence type="ECO:0000250" key="1"/>
<evidence type="ECO:0000305" key="2"/>
<sequence length="268" mass="29986">MDDSTLRRKYPHHEWHAVNEGDSGAFVYQLTGGPEPQPELYAKIAPRAPENSAFDLSGEADRLEWLHRHGIPVPRVVERGADDTAAWLVTEAVPGVAAAEEWPEHQRFAVVEAMAELARALHELPVEDCPSDRRLDAAVAEARRNVAEGLVDLDDLQEERAGWTGDQLLAELDRTRPEKEDLVVCHGDLCPNNVLLDPGTCRVTGVIDVGRLGVADRHADIALAARELEIDEDPWFGPAYAERFLERYGAHRVDKEKLAFYQLLDEFF</sequence>
<dbReference type="EC" id="2.7.1.95"/>
<dbReference type="EMBL" id="K00432">
    <property type="protein sequence ID" value="AAA26699.1"/>
    <property type="molecule type" value="Genomic_DNA"/>
</dbReference>
<dbReference type="EMBL" id="X02394">
    <property type="protein sequence ID" value="CAA26236.1"/>
    <property type="molecule type" value="Genomic_DNA"/>
</dbReference>
<dbReference type="EMBL" id="A04924">
    <property type="protein sequence ID" value="CAA00404.1"/>
    <property type="molecule type" value="Unassigned_DNA"/>
</dbReference>
<dbReference type="PIR" id="A00666">
    <property type="entry name" value="PKSMR"/>
</dbReference>
<dbReference type="RefSeq" id="WP_063842176.1">
    <property type="nucleotide sequence ID" value="NG_047450.1"/>
</dbReference>
<dbReference type="SMR" id="P00555"/>
<dbReference type="CARD" id="ARO:3002649">
    <property type="molecule name" value="APH(3')-Va"/>
    <property type="mechanism identifier" value="ARO:0001004"/>
    <property type="mechanism name" value="antibiotic inactivation"/>
</dbReference>
<dbReference type="KEGG" id="ag:AAA26699"/>
<dbReference type="GO" id="GO:0005524">
    <property type="term" value="F:ATP binding"/>
    <property type="evidence" value="ECO:0007669"/>
    <property type="project" value="UniProtKB-KW"/>
</dbReference>
<dbReference type="GO" id="GO:0008910">
    <property type="term" value="F:kanamycin kinase activity"/>
    <property type="evidence" value="ECO:0007669"/>
    <property type="project" value="UniProtKB-EC"/>
</dbReference>
<dbReference type="GO" id="GO:0046677">
    <property type="term" value="P:response to antibiotic"/>
    <property type="evidence" value="ECO:0007669"/>
    <property type="project" value="UniProtKB-KW"/>
</dbReference>
<dbReference type="CDD" id="cd05150">
    <property type="entry name" value="APH"/>
    <property type="match status" value="1"/>
</dbReference>
<dbReference type="Gene3D" id="3.90.1200.10">
    <property type="match status" value="1"/>
</dbReference>
<dbReference type="Gene3D" id="3.30.200.20">
    <property type="entry name" value="Phosphorylase Kinase, domain 1"/>
    <property type="match status" value="1"/>
</dbReference>
<dbReference type="InterPro" id="IPR051678">
    <property type="entry name" value="AGP_Transferase"/>
</dbReference>
<dbReference type="InterPro" id="IPR002575">
    <property type="entry name" value="Aminoglycoside_PTrfase"/>
</dbReference>
<dbReference type="InterPro" id="IPR024165">
    <property type="entry name" value="Kan/Strep_kinase"/>
</dbReference>
<dbReference type="InterPro" id="IPR011009">
    <property type="entry name" value="Kinase-like_dom_sf"/>
</dbReference>
<dbReference type="NCBIfam" id="NF033068">
    <property type="entry name" value="APH_3p"/>
    <property type="match status" value="1"/>
</dbReference>
<dbReference type="NCBIfam" id="NF032897">
    <property type="entry name" value="APH_3p_V"/>
    <property type="match status" value="1"/>
</dbReference>
<dbReference type="PANTHER" id="PTHR21310:SF41">
    <property type="entry name" value="3'-PHOSPHOTRANSFERASE, PUTATIVE-RELATED"/>
    <property type="match status" value="1"/>
</dbReference>
<dbReference type="PANTHER" id="PTHR21310">
    <property type="entry name" value="AMINOGLYCOSIDE PHOSPHOTRANSFERASE-RELATED-RELATED"/>
    <property type="match status" value="1"/>
</dbReference>
<dbReference type="Pfam" id="PF01636">
    <property type="entry name" value="APH"/>
    <property type="match status" value="1"/>
</dbReference>
<dbReference type="PIRSF" id="PIRSF000706">
    <property type="entry name" value="Kanamycin_kin"/>
    <property type="match status" value="1"/>
</dbReference>
<dbReference type="SUPFAM" id="SSF56112">
    <property type="entry name" value="Protein kinase-like (PK-like)"/>
    <property type="match status" value="1"/>
</dbReference>
<proteinExistence type="inferred from homology"/>